<organism>
    <name type="scientific">Parasynechococcus marenigrum (strain WH8102)</name>
    <dbReference type="NCBI Taxonomy" id="84588"/>
    <lineage>
        <taxon>Bacteria</taxon>
        <taxon>Bacillati</taxon>
        <taxon>Cyanobacteriota</taxon>
        <taxon>Cyanophyceae</taxon>
        <taxon>Synechococcales</taxon>
        <taxon>Prochlorococcaceae</taxon>
        <taxon>Parasynechococcus</taxon>
        <taxon>Parasynechococcus marenigrum</taxon>
    </lineage>
</organism>
<keyword id="KW-0547">Nucleotide-binding</keyword>
<reference key="1">
    <citation type="journal article" date="2003" name="Nature">
        <title>The genome of a motile marine Synechococcus.</title>
        <authorList>
            <person name="Palenik B."/>
            <person name="Brahamsha B."/>
            <person name="Larimer F.W."/>
            <person name="Land M.L."/>
            <person name="Hauser L."/>
            <person name="Chain P."/>
            <person name="Lamerdin J.E."/>
            <person name="Regala W."/>
            <person name="Allen E.E."/>
            <person name="McCarren J."/>
            <person name="Paulsen I.T."/>
            <person name="Dufresne A."/>
            <person name="Partensky F."/>
            <person name="Webb E.A."/>
            <person name="Waterbury J."/>
        </authorList>
    </citation>
    <scope>NUCLEOTIDE SEQUENCE [LARGE SCALE GENOMIC DNA]</scope>
    <source>
        <strain>WH8102</strain>
    </source>
</reference>
<accession>Q7U591</accession>
<name>Y1816_PARMW</name>
<proteinExistence type="inferred from homology"/>
<protein>
    <recommendedName>
        <fullName evidence="1">Nucleotide-binding protein SYNW1816</fullName>
    </recommendedName>
</protein>
<sequence>MASTSSFDVVSDFDRQELVNTLDQVRRDVGNRYDLKDSNTEIQLEETELVITTASDMTLQAVEDVLRAKATKRNLSLKIFDFQTPESVGGNRVKQVVKLRKGLSQEIAKKLSKIVRDELKKVTVAIQGESVRITGKSKDDLQAAIQLVKSKEDELDVPLQFENYR</sequence>
<evidence type="ECO:0000255" key="1">
    <source>
        <dbReference type="HAMAP-Rule" id="MF_00632"/>
    </source>
</evidence>
<feature type="chain" id="PRO_1000147327" description="Nucleotide-binding protein SYNW1816">
    <location>
        <begin position="1"/>
        <end position="165"/>
    </location>
</feature>
<comment type="function">
    <text evidence="1">Nucleotide-binding protein.</text>
</comment>
<comment type="similarity">
    <text evidence="1">Belongs to the YajQ family.</text>
</comment>
<gene>
    <name type="ordered locus">SYNW1816</name>
</gene>
<dbReference type="EMBL" id="BX569693">
    <property type="protein sequence ID" value="CAE08331.1"/>
    <property type="molecule type" value="Genomic_DNA"/>
</dbReference>
<dbReference type="RefSeq" id="WP_011128676.1">
    <property type="nucleotide sequence ID" value="NC_005070.1"/>
</dbReference>
<dbReference type="SMR" id="Q7U591"/>
<dbReference type="STRING" id="84588.SYNW1816"/>
<dbReference type="KEGG" id="syw:SYNW1816"/>
<dbReference type="eggNOG" id="COG1666">
    <property type="taxonomic scope" value="Bacteria"/>
</dbReference>
<dbReference type="HOGENOM" id="CLU_099839_0_0_3"/>
<dbReference type="Proteomes" id="UP000001422">
    <property type="component" value="Chromosome"/>
</dbReference>
<dbReference type="GO" id="GO:0005829">
    <property type="term" value="C:cytosol"/>
    <property type="evidence" value="ECO:0007669"/>
    <property type="project" value="TreeGrafter"/>
</dbReference>
<dbReference type="GO" id="GO:0000166">
    <property type="term" value="F:nucleotide binding"/>
    <property type="evidence" value="ECO:0007669"/>
    <property type="project" value="TreeGrafter"/>
</dbReference>
<dbReference type="CDD" id="cd11740">
    <property type="entry name" value="YajQ_like"/>
    <property type="match status" value="1"/>
</dbReference>
<dbReference type="Gene3D" id="3.30.70.860">
    <property type="match status" value="1"/>
</dbReference>
<dbReference type="Gene3D" id="3.30.70.990">
    <property type="entry name" value="YajQ-like, domain 2"/>
    <property type="match status" value="1"/>
</dbReference>
<dbReference type="HAMAP" id="MF_00632">
    <property type="entry name" value="YajQ"/>
    <property type="match status" value="1"/>
</dbReference>
<dbReference type="InterPro" id="IPR007551">
    <property type="entry name" value="DUF520"/>
</dbReference>
<dbReference type="InterPro" id="IPR035571">
    <property type="entry name" value="UPF0234-like_C"/>
</dbReference>
<dbReference type="InterPro" id="IPR035570">
    <property type="entry name" value="UPF0234_N"/>
</dbReference>
<dbReference type="InterPro" id="IPR036183">
    <property type="entry name" value="YajQ-like_sf"/>
</dbReference>
<dbReference type="NCBIfam" id="NF003819">
    <property type="entry name" value="PRK05412.1"/>
    <property type="match status" value="1"/>
</dbReference>
<dbReference type="PANTHER" id="PTHR30476">
    <property type="entry name" value="UPF0234 PROTEIN YAJQ"/>
    <property type="match status" value="1"/>
</dbReference>
<dbReference type="PANTHER" id="PTHR30476:SF0">
    <property type="entry name" value="UPF0234 PROTEIN YAJQ"/>
    <property type="match status" value="1"/>
</dbReference>
<dbReference type="Pfam" id="PF04461">
    <property type="entry name" value="DUF520"/>
    <property type="match status" value="1"/>
</dbReference>
<dbReference type="SUPFAM" id="SSF89963">
    <property type="entry name" value="YajQ-like"/>
    <property type="match status" value="2"/>
</dbReference>